<evidence type="ECO:0000255" key="1">
    <source>
        <dbReference type="HAMAP-Rule" id="MF_00129"/>
    </source>
</evidence>
<dbReference type="EMBL" id="CP001068">
    <property type="protein sequence ID" value="ACD28643.1"/>
    <property type="molecule type" value="Genomic_DNA"/>
</dbReference>
<dbReference type="SMR" id="B2UGW0"/>
<dbReference type="STRING" id="402626.Rpic_3523"/>
<dbReference type="KEGG" id="rpi:Rpic_3523"/>
<dbReference type="PATRIC" id="fig|402626.5.peg.4660"/>
<dbReference type="eggNOG" id="COG0445">
    <property type="taxonomic scope" value="Bacteria"/>
</dbReference>
<dbReference type="HOGENOM" id="CLU_007831_2_2_4"/>
<dbReference type="GO" id="GO:0005829">
    <property type="term" value="C:cytosol"/>
    <property type="evidence" value="ECO:0007669"/>
    <property type="project" value="TreeGrafter"/>
</dbReference>
<dbReference type="GO" id="GO:0050660">
    <property type="term" value="F:flavin adenine dinucleotide binding"/>
    <property type="evidence" value="ECO:0007669"/>
    <property type="project" value="UniProtKB-UniRule"/>
</dbReference>
<dbReference type="GO" id="GO:0030488">
    <property type="term" value="P:tRNA methylation"/>
    <property type="evidence" value="ECO:0007669"/>
    <property type="project" value="TreeGrafter"/>
</dbReference>
<dbReference type="GO" id="GO:0002098">
    <property type="term" value="P:tRNA wobble uridine modification"/>
    <property type="evidence" value="ECO:0007669"/>
    <property type="project" value="InterPro"/>
</dbReference>
<dbReference type="FunFam" id="1.10.10.1800:FF:000001">
    <property type="entry name" value="tRNA uridine 5-carboxymethylaminomethyl modification enzyme MnmG"/>
    <property type="match status" value="1"/>
</dbReference>
<dbReference type="FunFam" id="1.10.150.570:FF:000001">
    <property type="entry name" value="tRNA uridine 5-carboxymethylaminomethyl modification enzyme MnmG"/>
    <property type="match status" value="1"/>
</dbReference>
<dbReference type="FunFam" id="3.50.50.60:FF:000002">
    <property type="entry name" value="tRNA uridine 5-carboxymethylaminomethyl modification enzyme MnmG"/>
    <property type="match status" value="1"/>
</dbReference>
<dbReference type="FunFam" id="3.50.50.60:FF:000010">
    <property type="entry name" value="tRNA uridine 5-carboxymethylaminomethyl modification enzyme MnmG"/>
    <property type="match status" value="1"/>
</dbReference>
<dbReference type="Gene3D" id="3.50.50.60">
    <property type="entry name" value="FAD/NAD(P)-binding domain"/>
    <property type="match status" value="2"/>
</dbReference>
<dbReference type="Gene3D" id="1.10.150.570">
    <property type="entry name" value="GidA associated domain, C-terminal subdomain"/>
    <property type="match status" value="1"/>
</dbReference>
<dbReference type="Gene3D" id="1.10.10.1800">
    <property type="entry name" value="tRNA uridine 5-carboxymethylaminomethyl modification enzyme MnmG/GidA"/>
    <property type="match status" value="1"/>
</dbReference>
<dbReference type="HAMAP" id="MF_00129">
    <property type="entry name" value="MnmG_GidA"/>
    <property type="match status" value="1"/>
</dbReference>
<dbReference type="InterPro" id="IPR036188">
    <property type="entry name" value="FAD/NAD-bd_sf"/>
</dbReference>
<dbReference type="InterPro" id="IPR049312">
    <property type="entry name" value="GIDA_C_N"/>
</dbReference>
<dbReference type="InterPro" id="IPR004416">
    <property type="entry name" value="MnmG"/>
</dbReference>
<dbReference type="InterPro" id="IPR002218">
    <property type="entry name" value="MnmG-rel"/>
</dbReference>
<dbReference type="InterPro" id="IPR020595">
    <property type="entry name" value="MnmG-rel_CS"/>
</dbReference>
<dbReference type="InterPro" id="IPR026904">
    <property type="entry name" value="MnmG_C"/>
</dbReference>
<dbReference type="InterPro" id="IPR047001">
    <property type="entry name" value="MnmG_C_subdom"/>
</dbReference>
<dbReference type="InterPro" id="IPR044920">
    <property type="entry name" value="MnmG_C_subdom_sf"/>
</dbReference>
<dbReference type="InterPro" id="IPR040131">
    <property type="entry name" value="MnmG_N"/>
</dbReference>
<dbReference type="NCBIfam" id="TIGR00136">
    <property type="entry name" value="mnmG_gidA"/>
    <property type="match status" value="1"/>
</dbReference>
<dbReference type="PANTHER" id="PTHR11806">
    <property type="entry name" value="GLUCOSE INHIBITED DIVISION PROTEIN A"/>
    <property type="match status" value="1"/>
</dbReference>
<dbReference type="PANTHER" id="PTHR11806:SF0">
    <property type="entry name" value="PROTEIN MTO1 HOMOLOG, MITOCHONDRIAL"/>
    <property type="match status" value="1"/>
</dbReference>
<dbReference type="Pfam" id="PF01134">
    <property type="entry name" value="GIDA"/>
    <property type="match status" value="1"/>
</dbReference>
<dbReference type="Pfam" id="PF21680">
    <property type="entry name" value="GIDA_C_1st"/>
    <property type="match status" value="1"/>
</dbReference>
<dbReference type="Pfam" id="PF13932">
    <property type="entry name" value="SAM_GIDA_C"/>
    <property type="match status" value="1"/>
</dbReference>
<dbReference type="SMART" id="SM01228">
    <property type="entry name" value="GIDA_assoc_3"/>
    <property type="match status" value="1"/>
</dbReference>
<dbReference type="SUPFAM" id="SSF51905">
    <property type="entry name" value="FAD/NAD(P)-binding domain"/>
    <property type="match status" value="1"/>
</dbReference>
<dbReference type="PROSITE" id="PS01280">
    <property type="entry name" value="GIDA_1"/>
    <property type="match status" value="1"/>
</dbReference>
<dbReference type="PROSITE" id="PS01281">
    <property type="entry name" value="GIDA_2"/>
    <property type="match status" value="1"/>
</dbReference>
<gene>
    <name evidence="1" type="primary">mnmG</name>
    <name evidence="1" type="synonym">gidA</name>
    <name type="ordered locus">Rpic_3523</name>
</gene>
<keyword id="KW-0963">Cytoplasm</keyword>
<keyword id="KW-0274">FAD</keyword>
<keyword id="KW-0285">Flavoprotein</keyword>
<keyword id="KW-0520">NAD</keyword>
<keyword id="KW-0819">tRNA processing</keyword>
<accession>B2UGW0</accession>
<organism>
    <name type="scientific">Ralstonia pickettii (strain 12J)</name>
    <dbReference type="NCBI Taxonomy" id="402626"/>
    <lineage>
        <taxon>Bacteria</taxon>
        <taxon>Pseudomonadati</taxon>
        <taxon>Pseudomonadota</taxon>
        <taxon>Betaproteobacteria</taxon>
        <taxon>Burkholderiales</taxon>
        <taxon>Burkholderiaceae</taxon>
        <taxon>Ralstonia</taxon>
    </lineage>
</organism>
<protein>
    <recommendedName>
        <fullName evidence="1">tRNA uridine 5-carboxymethylaminomethyl modification enzyme MnmG</fullName>
    </recommendedName>
    <alternativeName>
        <fullName evidence="1">Glucose-inhibited division protein A</fullName>
    </alternativeName>
</protein>
<feature type="chain" id="PRO_1000095658" description="tRNA uridine 5-carboxymethylaminomethyl modification enzyme MnmG">
    <location>
        <begin position="1"/>
        <end position="649"/>
    </location>
</feature>
<feature type="binding site" evidence="1">
    <location>
        <begin position="13"/>
        <end position="18"/>
    </location>
    <ligand>
        <name>FAD</name>
        <dbReference type="ChEBI" id="CHEBI:57692"/>
    </ligand>
</feature>
<feature type="binding site" evidence="1">
    <location>
        <begin position="274"/>
        <end position="288"/>
    </location>
    <ligand>
        <name>NAD(+)</name>
        <dbReference type="ChEBI" id="CHEBI:57540"/>
    </ligand>
</feature>
<reference key="1">
    <citation type="submission" date="2008-05" db="EMBL/GenBank/DDBJ databases">
        <title>Complete sequence of chromosome 1 of Ralstonia pickettii 12J.</title>
        <authorList>
            <person name="Lucas S."/>
            <person name="Copeland A."/>
            <person name="Lapidus A."/>
            <person name="Glavina del Rio T."/>
            <person name="Dalin E."/>
            <person name="Tice H."/>
            <person name="Bruce D."/>
            <person name="Goodwin L."/>
            <person name="Pitluck S."/>
            <person name="Meincke L."/>
            <person name="Brettin T."/>
            <person name="Detter J.C."/>
            <person name="Han C."/>
            <person name="Kuske C.R."/>
            <person name="Schmutz J."/>
            <person name="Larimer F."/>
            <person name="Land M."/>
            <person name="Hauser L."/>
            <person name="Kyrpides N."/>
            <person name="Mikhailova N."/>
            <person name="Marsh T."/>
            <person name="Richardson P."/>
        </authorList>
    </citation>
    <scope>NUCLEOTIDE SEQUENCE [LARGE SCALE GENOMIC DNA]</scope>
    <source>
        <strain>12J</strain>
    </source>
</reference>
<proteinExistence type="inferred from homology"/>
<comment type="function">
    <text evidence="1">NAD-binding protein involved in the addition of a carboxymethylaminomethyl (cmnm) group at the wobble position (U34) of certain tRNAs, forming tRNA-cmnm(5)s(2)U34.</text>
</comment>
<comment type="cofactor">
    <cofactor evidence="1">
        <name>FAD</name>
        <dbReference type="ChEBI" id="CHEBI:57692"/>
    </cofactor>
</comment>
<comment type="subunit">
    <text evidence="1">Homodimer. Heterotetramer of two MnmE and two MnmG subunits.</text>
</comment>
<comment type="subcellular location">
    <subcellularLocation>
        <location evidence="1">Cytoplasm</location>
    </subcellularLocation>
</comment>
<comment type="similarity">
    <text evidence="1">Belongs to the MnmG family.</text>
</comment>
<name>MNMG_RALPJ</name>
<sequence length="649" mass="70809">MLYPIEFDVIVVGGGHAGTEAALAAARMGCQTLLLTHNIETLGQMSCNPSIGGIGKGHLVKEVDALGGAMAIATDEGGIQFRILNSSKGPAVRATRAQADRVLYKAAIRHRLENQPNLMLFQQAVEDLVVEGDRVIGAVTQVGVQFRARAVVLTAGTFLDGKIHVGLNNYTGGRAGDPAAVSLSARLKELKLPQGRLKTGTPPRIDGRSIDFSVLEEQPGDLDPVPVFSFMGRADMHPRQVPCWVTHTNERTHDIIRAGLDRSPMYTGVIEGVGPRYCPSIEDKIHRFASKDSHQIFLEPEGLATNEFYPNGVSTSLPFDVQLDLIHSMRGLENAHILRPGYAIEYDYFDPRGLKASLESKAISGLFFAGQINGTTGYEEAAAQGLLAGINAGLQVQGKDAWTPRRDQAYLGVLVDDLITRGVTEPYRMFTSRAEFRLSLREDNADMRLTEVGRTLGVVDDARWDAFNRKRDAVSRETERLKSTWVNPATLPLEDAEPVLGKGIEREYALADLLRRPNVTYETLVGMQGGKYALESPLAEDPLLAEQIREQVEIGIKYHGYIARQADEVERLGANENTRLPADFDYSQVRGLSIEVQQKLAKHKPETIGQASRISGITPAAVSLLLVHLKKGVLRGQVGPRASSEGEAA</sequence>